<sequence length="921" mass="103493">MMALGEPYYSSKPDKDFNFGSTMARRQMTPTMVTKLPKFVRNSPQAYDWIVRGLIFPTTGKTYFQRVVVITGGLEDGTYGSYAFNGSEWVEIYPIEHLNLMSSLKLIHKANALQERLRLSQEEKATLALDVQFLQHENVRLKELIPKPEPRKIQMKWIIVGAVLTFLSLIPGGYAQSQTNNTIFTDMIAACKYSTETLTENLDLRIKLALANITINDKLDAVRQILNFAFVPRAHWLRTVFYYIHYYEMWNIFMFVLAIGTVMRSARPGTDLITLATSHLSGFRMAVLPTIPFHTTMTLWVMNTLMVCYYFDNLLAITMAILAPILGIIFLCFMEDSNYVSQIRGLIATAVLIAGGHACLTLTGTTTSLFVVILTCRFIRMATVFIGTRFEIRDANGKVVATVPTRIKNVAFDFFQKLKQSGVRVGVNDFVVIKPGALCIIDTPEGKGTGFFSGNDIVTAAHVVGNNTFVSVCYEGLVYEAKVRYMPEKDIAFITCPGDLHPTARLKLSKNPDYSCVTVMAYVNEDLVVSTATAMVHGNTLSYAVRTQDGMSGAPVCDKYGRVLAVHQTNTGYTGGAVIIDPADFHPVKAPSQVELLKEEIERLKAQLNSAAENPVTVVTQQPIVTLEQKSVSDSDVVDLVRTAMEREMKVLRDEINGILAPFLQKKKGKTKHGRGRVRRNLRKGVKLLTEEEYRELLEKGLDRETFLDLIDRIIGERSGYPDYDDEDYYDEDDDGWGMVGDDVEFDYTEVINFDQAKPTPAPRTTKPKPCPEPKIEAQPLDLSQKKEKQPEHEQQVAKPTKPQKIEPQPYSQTYGKAPIWESYDFDWDEDDAKFILPAPHRLTKADEIVLGSKIVKLRTIIETAIKTQNYSALPEAVFELDKAAYEAGLEGFLQRVKSKNKAPKNYKGPQKTKGPKTTTH</sequence>
<proteinExistence type="evidence at protein level"/>
<gene>
    <name type="primary">ORF1</name>
</gene>
<reference key="1">
    <citation type="journal article" date="2000" name="J. Gen. Virol.">
        <title>Molecular analysis of a serotype 8 human astrovirus genome.</title>
        <authorList>
            <person name="Mendez-Toss M."/>
            <person name="Romero-Guido P."/>
            <person name="Munguia M.E."/>
            <person name="Mendez E."/>
            <person name="Arias C.F."/>
        </authorList>
    </citation>
    <scope>NUCLEOTIDE SEQUENCE [GENOMIC RNA]</scope>
    <source>
        <strain>Yuc8</strain>
    </source>
</reference>
<reference key="2">
    <citation type="journal article" date="2002" name="J. Gen. Virol.">
        <title>Proteolytic processing of a human astrovirus nonstructural protein.</title>
        <authorList>
            <person name="Kiang D."/>
            <person name="Matsui S.M."/>
        </authorList>
    </citation>
    <scope>PROTEOLYTIC PROCESSING (NON-STRUCTURAL POLYPROTEIN 1A)</scope>
</reference>
<reference key="3">
    <citation type="journal article" date="2003" name="J. Virol.">
        <title>Protein products of the open reading frames encoding nonstructural proteins of human astrovirus serotype 8.</title>
        <authorList>
            <person name="Mendez E."/>
            <person name="Salas-Ocampo M.P."/>
            <person name="Munguia M.E."/>
            <person name="Arias C.F."/>
        </authorList>
    </citation>
    <scope>PROTEOLYTIC PROCESSING (NON-STRUCTURAL POLYPROTEIN 1A)</scope>
    <source>
        <strain>Yuc8</strain>
    </source>
</reference>
<organismHost>
    <name type="scientific">Homo sapiens</name>
    <name type="common">Human</name>
    <dbReference type="NCBI Taxonomy" id="9606"/>
</organismHost>
<accession>Q9IFX3</accession>
<keyword id="KW-0191">Covalent protein-RNA linkage</keyword>
<keyword id="KW-1043">Host membrane</keyword>
<keyword id="KW-0378">Hydrolase</keyword>
<keyword id="KW-0472">Membrane</keyword>
<keyword id="KW-0597">Phosphoprotein</keyword>
<keyword id="KW-0645">Protease</keyword>
<keyword id="KW-0688">Ribosomal frameshifting</keyword>
<keyword id="KW-0720">Serine protease</keyword>
<keyword id="KW-0812">Transmembrane</keyword>
<keyword id="KW-1133">Transmembrane helix</keyword>
<keyword id="KW-0693">Viral RNA replication</keyword>
<dbReference type="EC" id="3.4.21.-" evidence="2"/>
<dbReference type="EMBL" id="AF260508">
    <property type="protein sequence ID" value="AAF85962.1"/>
    <property type="molecule type" value="Genomic_RNA"/>
</dbReference>
<dbReference type="SMR" id="Q9IFX3"/>
<dbReference type="IntAct" id="Q9IFX3">
    <property type="interactions" value="1"/>
</dbReference>
<dbReference type="MEROPS" id="S01.109"/>
<dbReference type="Proteomes" id="UP000008629">
    <property type="component" value="Genome"/>
</dbReference>
<dbReference type="GO" id="GO:0033644">
    <property type="term" value="C:host cell membrane"/>
    <property type="evidence" value="ECO:0007669"/>
    <property type="project" value="UniProtKB-SubCell"/>
</dbReference>
<dbReference type="GO" id="GO:0016020">
    <property type="term" value="C:membrane"/>
    <property type="evidence" value="ECO:0007669"/>
    <property type="project" value="UniProtKB-KW"/>
</dbReference>
<dbReference type="GO" id="GO:0034062">
    <property type="term" value="F:5'-3' RNA polymerase activity"/>
    <property type="evidence" value="ECO:0007669"/>
    <property type="project" value="RHEA"/>
</dbReference>
<dbReference type="GO" id="GO:0004252">
    <property type="term" value="F:serine-type endopeptidase activity"/>
    <property type="evidence" value="ECO:0007669"/>
    <property type="project" value="InterPro"/>
</dbReference>
<dbReference type="GO" id="GO:0070008">
    <property type="term" value="F:serine-type exopeptidase activity"/>
    <property type="evidence" value="ECO:0007669"/>
    <property type="project" value="InterPro"/>
</dbReference>
<dbReference type="GO" id="GO:0006508">
    <property type="term" value="P:proteolysis"/>
    <property type="evidence" value="ECO:0007669"/>
    <property type="project" value="UniProtKB-KW"/>
</dbReference>
<dbReference type="GO" id="GO:0075523">
    <property type="term" value="P:viral translational frameshifting"/>
    <property type="evidence" value="ECO:0007669"/>
    <property type="project" value="UniProtKB-KW"/>
</dbReference>
<dbReference type="Gene3D" id="2.40.10.10">
    <property type="entry name" value="Trypsin-like serine proteases"/>
    <property type="match status" value="2"/>
</dbReference>
<dbReference type="InterPro" id="IPR045835">
    <property type="entry name" value="Astro_1A"/>
</dbReference>
<dbReference type="InterPro" id="IPR045833">
    <property type="entry name" value="Astro_p19"/>
</dbReference>
<dbReference type="InterPro" id="IPR045836">
    <property type="entry name" value="Astro_VPg"/>
</dbReference>
<dbReference type="InterPro" id="IPR022068">
    <property type="entry name" value="Mamastrovirus_p20"/>
</dbReference>
<dbReference type="InterPro" id="IPR009003">
    <property type="entry name" value="Peptidase_S1_PA"/>
</dbReference>
<dbReference type="InterPro" id="IPR043504">
    <property type="entry name" value="Peptidase_S1_PA_chymotrypsin"/>
</dbReference>
<dbReference type="Pfam" id="PF19415">
    <property type="entry name" value="Astro_1A"/>
    <property type="match status" value="1"/>
</dbReference>
<dbReference type="Pfam" id="PF19414">
    <property type="entry name" value="Astro_p19"/>
    <property type="match status" value="1"/>
</dbReference>
<dbReference type="Pfam" id="PF19416">
    <property type="entry name" value="Astro_VPg"/>
    <property type="match status" value="1"/>
</dbReference>
<dbReference type="Pfam" id="PF12285">
    <property type="entry name" value="Astrovir_pp_1"/>
    <property type="match status" value="1"/>
</dbReference>
<dbReference type="Pfam" id="PF13365">
    <property type="entry name" value="Trypsin_2"/>
    <property type="match status" value="1"/>
</dbReference>
<dbReference type="SUPFAM" id="SSF50494">
    <property type="entry name" value="Trypsin-like serine proteases"/>
    <property type="match status" value="1"/>
</dbReference>
<evidence type="ECO:0000250" key="1"/>
<evidence type="ECO:0000250" key="2">
    <source>
        <dbReference type="UniProtKB" id="P0C6K4"/>
    </source>
</evidence>
<evidence type="ECO:0000250" key="3">
    <source>
        <dbReference type="UniProtKB" id="Q3ZN07"/>
    </source>
</evidence>
<evidence type="ECO:0000255" key="4"/>
<evidence type="ECO:0000256" key="5">
    <source>
        <dbReference type="SAM" id="MobiDB-lite"/>
    </source>
</evidence>
<evidence type="ECO:0000305" key="6"/>
<evidence type="ECO:0000305" key="7">
    <source>
    </source>
</evidence>
<comment type="function">
    <molecule>Serine protease p27</molecule>
    <text evidence="2">Responsible for the cleavage of the polyprotein into functional products.</text>
</comment>
<comment type="function">
    <molecule>Viral genome-linked protein</molecule>
    <text evidence="3">Protein covalently attached to the 5' extremity of the genomic and subgenomic RNAs (By similarity). It may serve as a primer for the replicase (By similarity).</text>
</comment>
<comment type="catalytic activity">
    <reaction>
        <text>RNA(n) + a ribonucleoside 5'-triphosphate = RNA(n+1) + diphosphate</text>
        <dbReference type="Rhea" id="RHEA:21248"/>
        <dbReference type="Rhea" id="RHEA-COMP:14527"/>
        <dbReference type="Rhea" id="RHEA-COMP:17342"/>
        <dbReference type="ChEBI" id="CHEBI:33019"/>
        <dbReference type="ChEBI" id="CHEBI:61557"/>
        <dbReference type="ChEBI" id="CHEBI:140395"/>
    </reaction>
</comment>
<comment type="subunit">
    <molecule>Serine protease p27</molecule>
    <text evidence="2">Monomer.</text>
</comment>
<comment type="subcellular location">
    <molecule>Transmembrane protein 1A</molecule>
    <subcellularLocation>
        <location evidence="6">Host membrane</location>
        <topology evidence="6">Multi-pass membrane protein</topology>
    </subcellularLocation>
</comment>
<comment type="alternative products">
    <event type="ribosomal frameshifting"/>
    <isoform>
        <id>Q9IFX3-1</id>
        <name>nsp1a</name>
        <sequence type="displayed"/>
    </isoform>
    <isoform>
        <id>Q9IFX2-1</id>
        <name>nsp1ab</name>
        <sequence type="external"/>
    </isoform>
</comment>
<comment type="PTM">
    <text evidence="2 7">Cleaved by the viral and host proteases (Probable). The protease is probably autocatalytically cleaved (By similarity).</text>
</comment>
<comment type="similarity">
    <text evidence="6">Belongs to the astroviridae polyprotein 1A family.</text>
</comment>
<protein>
    <recommendedName>
        <fullName>Non-structural polyprotein 1A</fullName>
    </recommendedName>
    <component>
        <recommendedName>
            <fullName>Protein p19</fullName>
        </recommendedName>
    </component>
    <component>
        <recommendedName>
            <fullName>Transmembrane protein 1A</fullName>
        </recommendedName>
    </component>
    <component>
        <recommendedName>
            <fullName>Serine protease p27</fullName>
            <shortName>p27</shortName>
            <ecNumber evidence="2">3.4.21.-</ecNumber>
        </recommendedName>
    </component>
    <component>
        <recommendedName>
            <fullName>Viral genome-linked protein</fullName>
        </recommendedName>
        <alternativeName>
            <fullName>VPg</fullName>
        </alternativeName>
    </component>
    <component>
        <recommendedName>
            <fullName>Protein p20'</fullName>
        </recommendedName>
    </component>
</protein>
<name>NS1A_HASV8</name>
<organism>
    <name type="scientific">Human astrovirus-8</name>
    <name type="common">HAstV-8</name>
    <dbReference type="NCBI Taxonomy" id="43358"/>
    <lineage>
        <taxon>Viruses</taxon>
        <taxon>Riboviria</taxon>
        <taxon>Orthornavirae</taxon>
        <taxon>Pisuviricota</taxon>
        <taxon>Stelpaviricetes</taxon>
        <taxon>Stellavirales</taxon>
        <taxon>Astroviridae</taxon>
        <taxon>Mamastrovirus</taxon>
        <taxon>Mamastrovirus 1</taxon>
    </lineage>
</organism>
<feature type="chain" id="PRO_0000327340" description="Non-structural polyprotein 1A">
    <location>
        <begin position="1"/>
        <end position="921"/>
    </location>
</feature>
<feature type="chain" id="PRO_0000327341" description="Protein p19" evidence="4">
    <location>
        <begin position="1"/>
        <end position="176"/>
    </location>
</feature>
<feature type="chain" id="PRO_0000327342" description="Transmembrane protein 1A" evidence="4">
    <location>
        <begin position="177"/>
        <end position="420"/>
    </location>
</feature>
<feature type="chain" id="PRO_0000327343" description="Serine protease p27" evidence="4">
    <location>
        <begin position="421"/>
        <end position="665"/>
    </location>
</feature>
<feature type="chain" id="PRO_0000419598" description="Viral genome-linked protein" evidence="4">
    <location>
        <begin position="666"/>
        <end position="756"/>
    </location>
</feature>
<feature type="chain" id="PRO_0000327344" description="Protein p20'" evidence="4">
    <location>
        <begin position="757"/>
        <end position="921"/>
    </location>
</feature>
<feature type="transmembrane region" description="Helical" evidence="4">
    <location>
        <begin position="240"/>
        <end position="260"/>
    </location>
</feature>
<feature type="transmembrane region" description="Helical" evidence="4">
    <location>
        <begin position="287"/>
        <end position="307"/>
    </location>
</feature>
<feature type="transmembrane region" description="Helical" evidence="4">
    <location>
        <begin position="314"/>
        <end position="334"/>
    </location>
</feature>
<feature type="transmembrane region" description="Helical" evidence="4">
    <location>
        <begin position="345"/>
        <end position="365"/>
    </location>
</feature>
<feature type="region of interest" description="Disordered" evidence="5">
    <location>
        <begin position="753"/>
        <end position="813"/>
    </location>
</feature>
<feature type="region of interest" description="Disordered" evidence="5">
    <location>
        <begin position="900"/>
        <end position="921"/>
    </location>
</feature>
<feature type="compositionally biased region" description="Basic and acidic residues" evidence="5">
    <location>
        <begin position="784"/>
        <end position="796"/>
    </location>
</feature>
<feature type="compositionally biased region" description="Low complexity" evidence="5">
    <location>
        <begin position="908"/>
        <end position="921"/>
    </location>
</feature>
<feature type="active site" description="Charge relay system; for serine protease activity" evidence="1">
    <location>
        <position position="462"/>
    </location>
</feature>
<feature type="active site" description="Charge relay system; for serine protease activity" evidence="1">
    <location>
        <position position="490"/>
    </location>
</feature>
<feature type="active site" description="Charge relay system; for serine protease activity" evidence="1">
    <location>
        <position position="552"/>
    </location>
</feature>
<feature type="site" description="Cleavage" evidence="4">
    <location>
        <begin position="176"/>
        <end position="177"/>
    </location>
</feature>
<feature type="site" description="Cleavage" evidence="4">
    <location>
        <begin position="420"/>
        <end position="421"/>
    </location>
</feature>
<feature type="site" description="Cleavage" evidence="2">
    <location>
        <begin position="665"/>
        <end position="666"/>
    </location>
</feature>
<feature type="site" description="Cleavage" evidence="4">
    <location>
        <begin position="756"/>
        <end position="757"/>
    </location>
</feature>
<feature type="modified residue" description="O-(5'-phospho-RNA)-tyrosine" evidence="3">
    <location>
        <position position="694"/>
    </location>
</feature>